<proteinExistence type="inferred from homology"/>
<evidence type="ECO:0000255" key="1">
    <source>
        <dbReference type="HAMAP-Rule" id="MF_00328"/>
    </source>
</evidence>
<name>KGUA_CUTAK</name>
<gene>
    <name evidence="1" type="primary">gmk</name>
    <name type="ordered locus">PPA1190</name>
</gene>
<organism>
    <name type="scientific">Cutibacterium acnes (strain DSM 16379 / KPA171202)</name>
    <name type="common">Propionibacterium acnes</name>
    <dbReference type="NCBI Taxonomy" id="267747"/>
    <lineage>
        <taxon>Bacteria</taxon>
        <taxon>Bacillati</taxon>
        <taxon>Actinomycetota</taxon>
        <taxon>Actinomycetes</taxon>
        <taxon>Propionibacteriales</taxon>
        <taxon>Propionibacteriaceae</taxon>
        <taxon>Cutibacterium</taxon>
    </lineage>
</organism>
<reference key="1">
    <citation type="journal article" date="2004" name="Science">
        <title>The complete genome sequence of Propionibacterium acnes, a commensal of human skin.</title>
        <authorList>
            <person name="Brueggemann H."/>
            <person name="Henne A."/>
            <person name="Hoster F."/>
            <person name="Liesegang H."/>
            <person name="Wiezer A."/>
            <person name="Strittmatter A."/>
            <person name="Hujer S."/>
            <person name="Duerre P."/>
            <person name="Gottschalk G."/>
        </authorList>
    </citation>
    <scope>NUCLEOTIDE SEQUENCE [LARGE SCALE GENOMIC DNA]</scope>
    <source>
        <strain>DSM 16379 / KPA171202</strain>
    </source>
</reference>
<accession>Q6A8H6</accession>
<keyword id="KW-0067">ATP-binding</keyword>
<keyword id="KW-0963">Cytoplasm</keyword>
<keyword id="KW-0418">Kinase</keyword>
<keyword id="KW-0547">Nucleotide-binding</keyword>
<keyword id="KW-0808">Transferase</keyword>
<dbReference type="EC" id="2.7.4.8" evidence="1"/>
<dbReference type="EMBL" id="AE017283">
    <property type="protein sequence ID" value="AAT82939.1"/>
    <property type="molecule type" value="Genomic_DNA"/>
</dbReference>
<dbReference type="RefSeq" id="WP_002516820.1">
    <property type="nucleotide sequence ID" value="NZ_CP025935.1"/>
</dbReference>
<dbReference type="SMR" id="Q6A8H6"/>
<dbReference type="EnsemblBacteria" id="AAT82939">
    <property type="protein sequence ID" value="AAT82939"/>
    <property type="gene ID" value="PPA1190"/>
</dbReference>
<dbReference type="GeneID" id="92857161"/>
<dbReference type="KEGG" id="pac:PPA1190"/>
<dbReference type="eggNOG" id="COG0194">
    <property type="taxonomic scope" value="Bacteria"/>
</dbReference>
<dbReference type="HOGENOM" id="CLU_001715_1_1_11"/>
<dbReference type="Proteomes" id="UP000000603">
    <property type="component" value="Chromosome"/>
</dbReference>
<dbReference type="GO" id="GO:0005829">
    <property type="term" value="C:cytosol"/>
    <property type="evidence" value="ECO:0007669"/>
    <property type="project" value="TreeGrafter"/>
</dbReference>
<dbReference type="GO" id="GO:0005524">
    <property type="term" value="F:ATP binding"/>
    <property type="evidence" value="ECO:0007669"/>
    <property type="project" value="UniProtKB-UniRule"/>
</dbReference>
<dbReference type="GO" id="GO:0004385">
    <property type="term" value="F:guanylate kinase activity"/>
    <property type="evidence" value="ECO:0007669"/>
    <property type="project" value="UniProtKB-UniRule"/>
</dbReference>
<dbReference type="CDD" id="cd00071">
    <property type="entry name" value="GMPK"/>
    <property type="match status" value="1"/>
</dbReference>
<dbReference type="FunFam" id="3.30.63.10:FF:000002">
    <property type="entry name" value="Guanylate kinase 1"/>
    <property type="match status" value="1"/>
</dbReference>
<dbReference type="Gene3D" id="3.30.63.10">
    <property type="entry name" value="Guanylate Kinase phosphate binding domain"/>
    <property type="match status" value="1"/>
</dbReference>
<dbReference type="Gene3D" id="3.40.50.300">
    <property type="entry name" value="P-loop containing nucleotide triphosphate hydrolases"/>
    <property type="match status" value="1"/>
</dbReference>
<dbReference type="HAMAP" id="MF_00328">
    <property type="entry name" value="Guanylate_kinase"/>
    <property type="match status" value="1"/>
</dbReference>
<dbReference type="InterPro" id="IPR008145">
    <property type="entry name" value="GK/Ca_channel_bsu"/>
</dbReference>
<dbReference type="InterPro" id="IPR008144">
    <property type="entry name" value="Guanylate_kin-like_dom"/>
</dbReference>
<dbReference type="InterPro" id="IPR017665">
    <property type="entry name" value="Guanylate_kinase"/>
</dbReference>
<dbReference type="InterPro" id="IPR020590">
    <property type="entry name" value="Guanylate_kinase_CS"/>
</dbReference>
<dbReference type="InterPro" id="IPR027417">
    <property type="entry name" value="P-loop_NTPase"/>
</dbReference>
<dbReference type="NCBIfam" id="TIGR03263">
    <property type="entry name" value="guanyl_kin"/>
    <property type="match status" value="1"/>
</dbReference>
<dbReference type="PANTHER" id="PTHR23117:SF13">
    <property type="entry name" value="GUANYLATE KINASE"/>
    <property type="match status" value="1"/>
</dbReference>
<dbReference type="PANTHER" id="PTHR23117">
    <property type="entry name" value="GUANYLATE KINASE-RELATED"/>
    <property type="match status" value="1"/>
</dbReference>
<dbReference type="Pfam" id="PF00625">
    <property type="entry name" value="Guanylate_kin"/>
    <property type="match status" value="1"/>
</dbReference>
<dbReference type="SMART" id="SM00072">
    <property type="entry name" value="GuKc"/>
    <property type="match status" value="1"/>
</dbReference>
<dbReference type="SUPFAM" id="SSF52540">
    <property type="entry name" value="P-loop containing nucleoside triphosphate hydrolases"/>
    <property type="match status" value="1"/>
</dbReference>
<dbReference type="PROSITE" id="PS00856">
    <property type="entry name" value="GUANYLATE_KINASE_1"/>
    <property type="match status" value="1"/>
</dbReference>
<dbReference type="PROSITE" id="PS50052">
    <property type="entry name" value="GUANYLATE_KINASE_2"/>
    <property type="match status" value="1"/>
</dbReference>
<protein>
    <recommendedName>
        <fullName evidence="1">Guanylate kinase</fullName>
        <ecNumber evidence="1">2.7.4.8</ecNumber>
    </recommendedName>
    <alternativeName>
        <fullName evidence="1">GMP kinase</fullName>
    </alternativeName>
</protein>
<sequence length="199" mass="21801">MSSVPVIPQARGLRHTGPVTVAVVSGPTAVGKGTVVGALLRSHPEIVVSRSVTTRPPRPTERDGIDYDFITPEQFDKLVDGEGLLEWATVHNSHRYGTPRGPVERAVADNRTVVLEIDLQGARQVRETYPQATQIFLAPPSWEELVHRLIGRGTETPEQQKQRLETAKVELANADEFDAVVVNDTVDHAVAHLVELLSL</sequence>
<comment type="function">
    <text evidence="1">Essential for recycling GMP and indirectly, cGMP.</text>
</comment>
<comment type="catalytic activity">
    <reaction evidence="1">
        <text>GMP + ATP = GDP + ADP</text>
        <dbReference type="Rhea" id="RHEA:20780"/>
        <dbReference type="ChEBI" id="CHEBI:30616"/>
        <dbReference type="ChEBI" id="CHEBI:58115"/>
        <dbReference type="ChEBI" id="CHEBI:58189"/>
        <dbReference type="ChEBI" id="CHEBI:456216"/>
        <dbReference type="EC" id="2.7.4.8"/>
    </reaction>
</comment>
<comment type="subcellular location">
    <subcellularLocation>
        <location evidence="1">Cytoplasm</location>
    </subcellularLocation>
</comment>
<comment type="similarity">
    <text evidence="1">Belongs to the guanylate kinase family.</text>
</comment>
<feature type="chain" id="PRO_0000170583" description="Guanylate kinase">
    <location>
        <begin position="1"/>
        <end position="199"/>
    </location>
</feature>
<feature type="domain" description="Guanylate kinase-like" evidence="1">
    <location>
        <begin position="19"/>
        <end position="198"/>
    </location>
</feature>
<feature type="binding site" evidence="1">
    <location>
        <begin position="26"/>
        <end position="33"/>
    </location>
    <ligand>
        <name>ATP</name>
        <dbReference type="ChEBI" id="CHEBI:30616"/>
    </ligand>
</feature>